<keyword id="KW-0963">Cytoplasm</keyword>
<keyword id="KW-0804">Transcription</keyword>
<keyword id="KW-0805">Transcription regulation</keyword>
<gene>
    <name evidence="1" type="primary">rsd</name>
    <name type="ordered locus">YPK_0348</name>
</gene>
<dbReference type="EMBL" id="CP000950">
    <property type="protein sequence ID" value="ACA66658.1"/>
    <property type="molecule type" value="Genomic_DNA"/>
</dbReference>
<dbReference type="RefSeq" id="WP_011191553.1">
    <property type="nucleotide sequence ID" value="NZ_CP009792.1"/>
</dbReference>
<dbReference type="SMR" id="B1JJK7"/>
<dbReference type="GeneID" id="49787717"/>
<dbReference type="KEGG" id="ypy:YPK_0348"/>
<dbReference type="PATRIC" id="fig|502800.11.peg.952"/>
<dbReference type="GO" id="GO:0005737">
    <property type="term" value="C:cytoplasm"/>
    <property type="evidence" value="ECO:0007669"/>
    <property type="project" value="UniProtKB-SubCell"/>
</dbReference>
<dbReference type="GO" id="GO:0006355">
    <property type="term" value="P:regulation of DNA-templated transcription"/>
    <property type="evidence" value="ECO:0007669"/>
    <property type="project" value="InterPro"/>
</dbReference>
<dbReference type="Gene3D" id="1.20.120.1370">
    <property type="entry name" value="Regulator of RNA polymerase sigma(70) subunit, domain 4"/>
    <property type="match status" value="1"/>
</dbReference>
<dbReference type="HAMAP" id="MF_01181">
    <property type="entry name" value="Rsd"/>
    <property type="match status" value="1"/>
</dbReference>
<dbReference type="InterPro" id="IPR038309">
    <property type="entry name" value="Rsd/AlgQ_sf"/>
</dbReference>
<dbReference type="InterPro" id="IPR023785">
    <property type="entry name" value="Sigma70_reg_Rsd"/>
</dbReference>
<dbReference type="InterPro" id="IPR007448">
    <property type="entry name" value="Sigma70_reg_Rsd_AlgQ"/>
</dbReference>
<dbReference type="NCBIfam" id="NF008723">
    <property type="entry name" value="PRK11718.1"/>
    <property type="match status" value="1"/>
</dbReference>
<dbReference type="Pfam" id="PF04353">
    <property type="entry name" value="Rsd_AlgQ"/>
    <property type="match status" value="1"/>
</dbReference>
<dbReference type="PIRSF" id="PIRSF016548">
    <property type="entry name" value="Rsd_AlgQ"/>
    <property type="match status" value="1"/>
</dbReference>
<accession>B1JJK7</accession>
<protein>
    <recommendedName>
        <fullName evidence="1">Regulator of sigma D</fullName>
    </recommendedName>
</protein>
<proteinExistence type="inferred from homology"/>
<feature type="chain" id="PRO_1000138208" description="Regulator of sigma D">
    <location>
        <begin position="1"/>
        <end position="169"/>
    </location>
</feature>
<comment type="function">
    <text evidence="1">Binds RpoD and negatively regulates RpoD-mediated transcription activation by preventing the interaction between the primary sigma factor RpoD with the catalytic core of the RNA polymerase and with promoter DNA. May be involved in replacement of the RNA polymerase sigma subunit from RpoD to RpoS during the transition from exponential growth to the stationary phase.</text>
</comment>
<comment type="subunit">
    <text evidence="1">Interacts with RpoD.</text>
</comment>
<comment type="subcellular location">
    <subcellularLocation>
        <location evidence="1">Cytoplasm</location>
    </subcellularLocation>
</comment>
<comment type="similarity">
    <text evidence="1">Belongs to the Rsd/AlgQ family.</text>
</comment>
<sequence>MLNRLESLTQRVGGSNELIDQWLHARKELLVSYCTVIGIKPQKEKHTPLNAKTLENFCHNLVDYLSSGHFHIYDRIIKEVEGASSPKMALTAKIHPALKNNTQTIMAFHDRYTNIEIDDDSCTEYQQALSDIGEALDARFKLEDQLIQWAAESWQAAQLADADKKSQVN</sequence>
<evidence type="ECO:0000255" key="1">
    <source>
        <dbReference type="HAMAP-Rule" id="MF_01181"/>
    </source>
</evidence>
<reference key="1">
    <citation type="submission" date="2008-02" db="EMBL/GenBank/DDBJ databases">
        <title>Complete sequence of Yersinia pseudotuberculosis YPIII.</title>
        <authorList>
            <consortium name="US DOE Joint Genome Institute"/>
            <person name="Copeland A."/>
            <person name="Lucas S."/>
            <person name="Lapidus A."/>
            <person name="Glavina del Rio T."/>
            <person name="Dalin E."/>
            <person name="Tice H."/>
            <person name="Bruce D."/>
            <person name="Goodwin L."/>
            <person name="Pitluck S."/>
            <person name="Munk A.C."/>
            <person name="Brettin T."/>
            <person name="Detter J.C."/>
            <person name="Han C."/>
            <person name="Tapia R."/>
            <person name="Schmutz J."/>
            <person name="Larimer F."/>
            <person name="Land M."/>
            <person name="Hauser L."/>
            <person name="Challacombe J.F."/>
            <person name="Green L."/>
            <person name="Lindler L.E."/>
            <person name="Nikolich M.P."/>
            <person name="Richardson P."/>
        </authorList>
    </citation>
    <scope>NUCLEOTIDE SEQUENCE [LARGE SCALE GENOMIC DNA]</scope>
    <source>
        <strain>YPIII</strain>
    </source>
</reference>
<name>RSD_YERPY</name>
<organism>
    <name type="scientific">Yersinia pseudotuberculosis serotype O:3 (strain YPIII)</name>
    <dbReference type="NCBI Taxonomy" id="502800"/>
    <lineage>
        <taxon>Bacteria</taxon>
        <taxon>Pseudomonadati</taxon>
        <taxon>Pseudomonadota</taxon>
        <taxon>Gammaproteobacteria</taxon>
        <taxon>Enterobacterales</taxon>
        <taxon>Yersiniaceae</taxon>
        <taxon>Yersinia</taxon>
    </lineage>
</organism>